<organism>
    <name type="scientific">Campylobacter curvus (strain 525.92)</name>
    <dbReference type="NCBI Taxonomy" id="360105"/>
    <lineage>
        <taxon>Bacteria</taxon>
        <taxon>Pseudomonadati</taxon>
        <taxon>Campylobacterota</taxon>
        <taxon>Epsilonproteobacteria</taxon>
        <taxon>Campylobacterales</taxon>
        <taxon>Campylobacteraceae</taxon>
        <taxon>Campylobacter</taxon>
    </lineage>
</organism>
<name>SYI_CAMC5</name>
<reference key="1">
    <citation type="submission" date="2007-07" db="EMBL/GenBank/DDBJ databases">
        <title>Genome sequence of Campylobacter curvus 525.92 isolated from human feces.</title>
        <authorList>
            <person name="Fouts D.E."/>
            <person name="Mongodin E.F."/>
            <person name="Puiu D."/>
            <person name="Sebastian Y."/>
            <person name="Miller W.G."/>
            <person name="Mandrell R.E."/>
            <person name="Lastovica A.J."/>
            <person name="Nelson K.E."/>
        </authorList>
    </citation>
    <scope>NUCLEOTIDE SEQUENCE [LARGE SCALE GENOMIC DNA]</scope>
    <source>
        <strain>525.92</strain>
    </source>
</reference>
<comment type="function">
    <text evidence="1">Catalyzes the attachment of isoleucine to tRNA(Ile). As IleRS can inadvertently accommodate and process structurally similar amino acids such as valine, to avoid such errors it has two additional distinct tRNA(Ile)-dependent editing activities. One activity is designated as 'pretransfer' editing and involves the hydrolysis of activated Val-AMP. The other activity is designated 'posttransfer' editing and involves deacylation of mischarged Val-tRNA(Ile).</text>
</comment>
<comment type="catalytic activity">
    <reaction evidence="1">
        <text>tRNA(Ile) + L-isoleucine + ATP = L-isoleucyl-tRNA(Ile) + AMP + diphosphate</text>
        <dbReference type="Rhea" id="RHEA:11060"/>
        <dbReference type="Rhea" id="RHEA-COMP:9666"/>
        <dbReference type="Rhea" id="RHEA-COMP:9695"/>
        <dbReference type="ChEBI" id="CHEBI:30616"/>
        <dbReference type="ChEBI" id="CHEBI:33019"/>
        <dbReference type="ChEBI" id="CHEBI:58045"/>
        <dbReference type="ChEBI" id="CHEBI:78442"/>
        <dbReference type="ChEBI" id="CHEBI:78528"/>
        <dbReference type="ChEBI" id="CHEBI:456215"/>
        <dbReference type="EC" id="6.1.1.5"/>
    </reaction>
</comment>
<comment type="cofactor">
    <cofactor evidence="1">
        <name>Zn(2+)</name>
        <dbReference type="ChEBI" id="CHEBI:29105"/>
    </cofactor>
    <text evidence="1">Binds 1 zinc ion per subunit.</text>
</comment>
<comment type="subunit">
    <text evidence="1">Monomer.</text>
</comment>
<comment type="subcellular location">
    <subcellularLocation>
        <location evidence="1">Cytoplasm</location>
    </subcellularLocation>
</comment>
<comment type="domain">
    <text evidence="1">IleRS has two distinct active sites: one for aminoacylation and one for editing. The misactivated valine is translocated from the active site to the editing site, which sterically excludes the correctly activated isoleucine. The single editing site contains two valyl binding pockets, one specific for each substrate (Val-AMP or Val-tRNA(Ile)).</text>
</comment>
<comment type="similarity">
    <text evidence="1">Belongs to the class-I aminoacyl-tRNA synthetase family. IleS type 1 subfamily.</text>
</comment>
<proteinExistence type="inferred from homology"/>
<protein>
    <recommendedName>
        <fullName evidence="1">Isoleucine--tRNA ligase</fullName>
        <ecNumber evidence="1">6.1.1.5</ecNumber>
    </recommendedName>
    <alternativeName>
        <fullName evidence="1">Isoleucyl-tRNA synthetase</fullName>
        <shortName evidence="1">IleRS</shortName>
    </alternativeName>
</protein>
<gene>
    <name evidence="1" type="primary">ileS</name>
    <name type="ordered locus">Ccur92_04640</name>
    <name type="ORF">CCV52592_0977</name>
</gene>
<dbReference type="EC" id="6.1.1.5" evidence="1"/>
<dbReference type="EMBL" id="CP000767">
    <property type="protein sequence ID" value="EAT99831.1"/>
    <property type="molecule type" value="Genomic_DNA"/>
</dbReference>
<dbReference type="RefSeq" id="WP_011991961.1">
    <property type="nucleotide sequence ID" value="NC_009715.2"/>
</dbReference>
<dbReference type="SMR" id="A7GX26"/>
<dbReference type="STRING" id="360105.CCV52592_0977"/>
<dbReference type="KEGG" id="ccv:CCV52592_0977"/>
<dbReference type="HOGENOM" id="CLU_001493_7_0_7"/>
<dbReference type="OrthoDB" id="9810365at2"/>
<dbReference type="Proteomes" id="UP000006380">
    <property type="component" value="Chromosome"/>
</dbReference>
<dbReference type="GO" id="GO:0005829">
    <property type="term" value="C:cytosol"/>
    <property type="evidence" value="ECO:0007669"/>
    <property type="project" value="TreeGrafter"/>
</dbReference>
<dbReference type="GO" id="GO:0002161">
    <property type="term" value="F:aminoacyl-tRNA deacylase activity"/>
    <property type="evidence" value="ECO:0007669"/>
    <property type="project" value="InterPro"/>
</dbReference>
<dbReference type="GO" id="GO:0005524">
    <property type="term" value="F:ATP binding"/>
    <property type="evidence" value="ECO:0007669"/>
    <property type="project" value="UniProtKB-UniRule"/>
</dbReference>
<dbReference type="GO" id="GO:0004822">
    <property type="term" value="F:isoleucine-tRNA ligase activity"/>
    <property type="evidence" value="ECO:0007669"/>
    <property type="project" value="UniProtKB-UniRule"/>
</dbReference>
<dbReference type="GO" id="GO:0000049">
    <property type="term" value="F:tRNA binding"/>
    <property type="evidence" value="ECO:0007669"/>
    <property type="project" value="InterPro"/>
</dbReference>
<dbReference type="GO" id="GO:0008270">
    <property type="term" value="F:zinc ion binding"/>
    <property type="evidence" value="ECO:0007669"/>
    <property type="project" value="UniProtKB-UniRule"/>
</dbReference>
<dbReference type="GO" id="GO:0006428">
    <property type="term" value="P:isoleucyl-tRNA aminoacylation"/>
    <property type="evidence" value="ECO:0007669"/>
    <property type="project" value="UniProtKB-UniRule"/>
</dbReference>
<dbReference type="CDD" id="cd07960">
    <property type="entry name" value="Anticodon_Ia_Ile_BEm"/>
    <property type="match status" value="1"/>
</dbReference>
<dbReference type="CDD" id="cd00818">
    <property type="entry name" value="IleRS_core"/>
    <property type="match status" value="1"/>
</dbReference>
<dbReference type="FunFam" id="3.40.50.620:FF:000092">
    <property type="entry name" value="Isoleucine--tRNA ligase"/>
    <property type="match status" value="1"/>
</dbReference>
<dbReference type="Gene3D" id="1.10.730.20">
    <property type="match status" value="1"/>
</dbReference>
<dbReference type="Gene3D" id="3.40.50.620">
    <property type="entry name" value="HUPs"/>
    <property type="match status" value="2"/>
</dbReference>
<dbReference type="Gene3D" id="3.90.740.10">
    <property type="entry name" value="Valyl/Leucyl/Isoleucyl-tRNA synthetase, editing domain"/>
    <property type="match status" value="1"/>
</dbReference>
<dbReference type="HAMAP" id="MF_02002">
    <property type="entry name" value="Ile_tRNA_synth_type1"/>
    <property type="match status" value="1"/>
</dbReference>
<dbReference type="InterPro" id="IPR001412">
    <property type="entry name" value="aa-tRNA-synth_I_CS"/>
</dbReference>
<dbReference type="InterPro" id="IPR002300">
    <property type="entry name" value="aa-tRNA-synth_Ia"/>
</dbReference>
<dbReference type="InterPro" id="IPR033708">
    <property type="entry name" value="Anticodon_Ile_BEm"/>
</dbReference>
<dbReference type="InterPro" id="IPR002301">
    <property type="entry name" value="Ile-tRNA-ligase"/>
</dbReference>
<dbReference type="InterPro" id="IPR023585">
    <property type="entry name" value="Ile-tRNA-ligase_type1"/>
</dbReference>
<dbReference type="InterPro" id="IPR050081">
    <property type="entry name" value="Ile-tRNA_ligase"/>
</dbReference>
<dbReference type="InterPro" id="IPR013155">
    <property type="entry name" value="M/V/L/I-tRNA-synth_anticd-bd"/>
</dbReference>
<dbReference type="InterPro" id="IPR014729">
    <property type="entry name" value="Rossmann-like_a/b/a_fold"/>
</dbReference>
<dbReference type="InterPro" id="IPR009080">
    <property type="entry name" value="tRNAsynth_Ia_anticodon-bd"/>
</dbReference>
<dbReference type="InterPro" id="IPR009008">
    <property type="entry name" value="Val/Leu/Ile-tRNA-synth_edit"/>
</dbReference>
<dbReference type="NCBIfam" id="TIGR00392">
    <property type="entry name" value="ileS"/>
    <property type="match status" value="1"/>
</dbReference>
<dbReference type="PANTHER" id="PTHR42765:SF1">
    <property type="entry name" value="ISOLEUCINE--TRNA LIGASE, MITOCHONDRIAL"/>
    <property type="match status" value="1"/>
</dbReference>
<dbReference type="PANTHER" id="PTHR42765">
    <property type="entry name" value="SOLEUCYL-TRNA SYNTHETASE"/>
    <property type="match status" value="1"/>
</dbReference>
<dbReference type="Pfam" id="PF08264">
    <property type="entry name" value="Anticodon_1"/>
    <property type="match status" value="1"/>
</dbReference>
<dbReference type="Pfam" id="PF00133">
    <property type="entry name" value="tRNA-synt_1"/>
    <property type="match status" value="1"/>
</dbReference>
<dbReference type="PRINTS" id="PR00984">
    <property type="entry name" value="TRNASYNTHILE"/>
</dbReference>
<dbReference type="SUPFAM" id="SSF47323">
    <property type="entry name" value="Anticodon-binding domain of a subclass of class I aminoacyl-tRNA synthetases"/>
    <property type="match status" value="1"/>
</dbReference>
<dbReference type="SUPFAM" id="SSF52374">
    <property type="entry name" value="Nucleotidylyl transferase"/>
    <property type="match status" value="1"/>
</dbReference>
<dbReference type="SUPFAM" id="SSF50677">
    <property type="entry name" value="ValRS/IleRS/LeuRS editing domain"/>
    <property type="match status" value="1"/>
</dbReference>
<dbReference type="PROSITE" id="PS00178">
    <property type="entry name" value="AA_TRNA_LIGASE_I"/>
    <property type="match status" value="1"/>
</dbReference>
<feature type="chain" id="PRO_1000022053" description="Isoleucine--tRNA ligase">
    <location>
        <begin position="1"/>
        <end position="919"/>
    </location>
</feature>
<feature type="short sequence motif" description="'HIGH' region">
    <location>
        <begin position="59"/>
        <end position="69"/>
    </location>
</feature>
<feature type="short sequence motif" description="'KMSKS' region">
    <location>
        <begin position="611"/>
        <end position="615"/>
    </location>
</feature>
<feature type="binding site" evidence="1">
    <location>
        <position position="570"/>
    </location>
    <ligand>
        <name>L-isoleucyl-5'-AMP</name>
        <dbReference type="ChEBI" id="CHEBI:178002"/>
    </ligand>
</feature>
<feature type="binding site" evidence="1">
    <location>
        <position position="614"/>
    </location>
    <ligand>
        <name>ATP</name>
        <dbReference type="ChEBI" id="CHEBI:30616"/>
    </ligand>
</feature>
<feature type="binding site" evidence="1">
    <location>
        <position position="893"/>
    </location>
    <ligand>
        <name>Zn(2+)</name>
        <dbReference type="ChEBI" id="CHEBI:29105"/>
    </ligand>
</feature>
<feature type="binding site" evidence="1">
    <location>
        <position position="896"/>
    </location>
    <ligand>
        <name>Zn(2+)</name>
        <dbReference type="ChEBI" id="CHEBI:29105"/>
    </ligand>
</feature>
<feature type="binding site" evidence="1">
    <location>
        <position position="908"/>
    </location>
    <ligand>
        <name>Zn(2+)</name>
        <dbReference type="ChEBI" id="CHEBI:29105"/>
    </ligand>
</feature>
<feature type="binding site" evidence="1">
    <location>
        <position position="911"/>
    </location>
    <ligand>
        <name>Zn(2+)</name>
        <dbReference type="ChEBI" id="CHEBI:29105"/>
    </ligand>
</feature>
<keyword id="KW-0030">Aminoacyl-tRNA synthetase</keyword>
<keyword id="KW-0067">ATP-binding</keyword>
<keyword id="KW-0963">Cytoplasm</keyword>
<keyword id="KW-0436">Ligase</keyword>
<keyword id="KW-0479">Metal-binding</keyword>
<keyword id="KW-0547">Nucleotide-binding</keyword>
<keyword id="KW-0648">Protein biosynthesis</keyword>
<keyword id="KW-1185">Reference proteome</keyword>
<keyword id="KW-0862">Zinc</keyword>
<sequence>MDYKDTLLLPATDFPMRGDLPKNEPIRLKSWYEERKIYEKMKSKRAGAAKNFAIHDGPPYANGHLHIGHALNKILKDIITKTHYFFGENVRYVPGWDCHGLPIEQQVEVKLGDKKKELSKTQIRELCRAHAREFIDIQREEFKALGIIGDFENPYMTMKFEFEADIYRSLCEIAKKGLLIERSKPVYWSWAAKSALAEAEVEYEDKEDYSIYVAFELDSDALAKLGVKLAKAVIWTTTPWTLPANQAISLKPDEIYVLTSENLIFAKPLLESLVNLGLTKGEILKEFVSNELENTHAINPLNDRKSRFLLGDHVLMDGGTGLVHTAPGHGEDDYYICLRYGFKEILMPVDDGGLYDETLKAHSLLRADVVDSFVGMHIFKANEKIIELLGENLLHVSKFTHSYPFCWRTHKPVIYRATKQWFIAMDEPKLGGKTLREVARGELENVKFYPSVGIKRIGSMIENRPDWCISRQRDWGVPIAFFRRKDTKEPIFEPKILEHIAKIFEQKGADAWWDMSVEELLAPDSGFEAKNLEKVMDILDVWFDSGSTWHAVLNSKNYDAGSYPADMYLEGSDQHRGWFQSSLLVSTAINSHAPYKNILTHGFTVDENGQKMSKSKGNVVAPQDVAKSYGVEILRLWVGLSDYSSDLKISENILKQVSEQYRKIRNTIRFLLANVNDLETIGTDFGFLDQWILGRAKRVFDEASKCFRAYDFSKGFNLLLNFLSADLSGIYLDICKDRLYCDAKDSPRRRSAQSAMAIITKSLLPLIAPTLTYTVDEVMDYAPAIIKGDAKDAFDLVYEPINFDFDVEDELLFASREKFFELIDALKKDKKIKSTLELVLETTSSKILDYDSVERADIYMVSDVHRYSGNEGLGEFEIDGEKFKIVLSDASKCPRCWKFNAIIDGSTCERCSEVLNSVC</sequence>
<evidence type="ECO:0000255" key="1">
    <source>
        <dbReference type="HAMAP-Rule" id="MF_02002"/>
    </source>
</evidence>
<accession>A7GX26</accession>